<dbReference type="EMBL" id="AF356083">
    <property type="protein sequence ID" value="AAM00194.1"/>
    <property type="molecule type" value="Genomic_RNA"/>
</dbReference>
<dbReference type="RefSeq" id="YP_249760.1">
    <property type="nucleotide sequence ID" value="NC_007157.1"/>
</dbReference>
<dbReference type="SMR" id="Q8QV05"/>
<dbReference type="KEGG" id="vg:5075880"/>
<dbReference type="Proteomes" id="UP000001677">
    <property type="component" value="Genome"/>
</dbReference>
<feature type="chain" id="PRO_0000403397" description="Uncharacterized protein VP6">
    <location>
        <begin position="1"/>
        <end position="845"/>
    </location>
</feature>
<feature type="region of interest" description="Disordered" evidence="2">
    <location>
        <begin position="17"/>
        <end position="37"/>
    </location>
</feature>
<feature type="region of interest" description="Disordered" evidence="2">
    <location>
        <begin position="550"/>
        <end position="573"/>
    </location>
</feature>
<feature type="coiled-coil region" evidence="1">
    <location>
        <begin position="622"/>
        <end position="707"/>
    </location>
</feature>
<keyword id="KW-0175">Coiled coil</keyword>
<keyword id="KW-1185">Reference proteome</keyword>
<proteinExistence type="predicted"/>
<evidence type="ECO:0000255" key="1"/>
<evidence type="ECO:0000256" key="2">
    <source>
        <dbReference type="SAM" id="MobiDB-lite"/>
    </source>
</evidence>
<organismHost>
    <name type="scientific">Saccharum officinarum</name>
    <name type="common">Sugarcane</name>
    <dbReference type="NCBI Taxonomy" id="4547"/>
</organismHost>
<gene>
    <name type="primary">S6</name>
</gene>
<reference key="1">
    <citation type="journal article" date="2004" name="Arch. Virol.">
        <title>Molecular analysis of Fiji disease virus genome segments 5, 6, 8 and 10.</title>
        <authorList>
            <person name="McQualter R.B."/>
            <person name="Burns P."/>
            <person name="Smith G.R."/>
            <person name="Dale J.L."/>
            <person name="Harding R.M."/>
        </authorList>
    </citation>
    <scope>NUCLEOTIDE SEQUENCE [GENOMIC RNA]</scope>
</reference>
<accession>Q8QV05</accession>
<protein>
    <recommendedName>
        <fullName>Uncharacterized protein VP6</fullName>
    </recommendedName>
</protein>
<sequence length="845" mass="96681">MNSAPLNDKLIFHTRRRRKQDALHSPSLNMDKKNDQPTVEIKNKVSENETDTVPRRDSQFNETSNLKNEPKVVNHNINMNDNLLIPVDPIIGKIKGNALHKMIIGNSVPDIGLTMPEEITQIMLSQNIDKKLNVTPVSQVTIVNPNKWNGFVLCHPGSSQHNDNNHVYTGNKFFVIYKRSNVMNNEQEINQFANDGIIILINKKEFKPKERDYQMRLFDSCSNVIVVEDEVDFDELSNVKICFSYEELTSASSLLPSHKKLIKYSCWPSNMVFPELKLINDYFSDLQSSVLNDLCLDESDGISTLFVVTNHVFAEQSDAIIESIHGHVLKDKIISKINSMFEKFEQRESRHIAFFGVVTTDEGNGNIHNKFLKNNCLIVMMNPLILTTYEKDYWNGLFSHFNKFIIESCVLSVYIAELIQVELLHGKAIKMLKQFFEAYGCTVLFECCETSKREEIGETSMSKSFDVECDTKKAGIEIQDNNINKRCDDNPNDDDGLDNYYVTDIDETEEDVEAIQKNSKCDDILTSDLRKLLKPSTLGLEVTIPEPSYAATEAEVEDQNSERNDDNALNESLCTEQQDDETVIVERNEEVENGISDDKYISCSYRDFINSETLKTHAHRFLSEQRFERENLEQIIEQLNCTVDELRQNSDSLIKELDDQKRLHSDAVDAYVEQVDVVKNKEIEYESRIAELEHELDELKKSNEHTRPSNANLECFQEGKNEYGVPELFAPFLRELKSLKETCPHLYDGECIQFENSENFLKFAIAKIQYMKLFATSKIKIQPAMLIGTGLMLSNESFNINGVLIQSSFDVNALRLLNVAQGESIEHSSGAMSVANFIKQFWSCV</sequence>
<name>VP6_FDVS</name>
<organism>
    <name type="scientific">Fiji disease virus (isolate Sugarcane)</name>
    <name type="common">FDV</name>
    <dbReference type="NCBI Taxonomy" id="648172"/>
    <lineage>
        <taxon>Viruses</taxon>
        <taxon>Riboviria</taxon>
        <taxon>Orthornavirae</taxon>
        <taxon>Duplornaviricota</taxon>
        <taxon>Resentoviricetes</taxon>
        <taxon>Reovirales</taxon>
        <taxon>Spinareoviridae</taxon>
        <taxon>Fijivirus</taxon>
        <taxon>Fiji disease virus</taxon>
    </lineage>
</organism>